<accession>P69538</accession>
<accession>P03677</accession>
<protein>
    <recommendedName>
        <fullName>Tail virion protein G9P</fullName>
    </recommendedName>
    <alternativeName>
        <fullName>Coat protein C, polypeptide II</fullName>
    </alternativeName>
    <alternativeName>
        <fullName>G9P</fullName>
    </alternativeName>
</protein>
<evidence type="ECO:0000250" key="1"/>
<evidence type="ECO:0000255" key="2"/>
<evidence type="ECO:0000305" key="3"/>
<dbReference type="EMBL" id="V00604">
    <property type="protein sequence ID" value="CAA23860.1"/>
    <property type="molecule type" value="Genomic_DNA"/>
</dbReference>
<dbReference type="PIR" id="B04279">
    <property type="entry name" value="Z9BPM3"/>
</dbReference>
<dbReference type="RefSeq" id="NP_510889.1">
    <property type="nucleotide sequence ID" value="NC_003287.2"/>
</dbReference>
<dbReference type="RefSeq" id="YP_010774616.1">
    <property type="nucleotide sequence ID" value="NC_074765.1"/>
</dbReference>
<dbReference type="PDB" id="8IXL">
    <property type="method" value="EM"/>
    <property type="resolution" value="3.50 A"/>
    <property type="chains" value="D/GA/J/Q/Y=1-32"/>
</dbReference>
<dbReference type="PDB" id="8JWW">
    <property type="method" value="EM"/>
    <property type="resolution" value="3.50 A"/>
    <property type="chains" value="D/GA/J/Q/Y=1-32"/>
</dbReference>
<dbReference type="PDBsum" id="8IXL"/>
<dbReference type="PDBsum" id="8JWW"/>
<dbReference type="EMDB" id="EMD-35795"/>
<dbReference type="SMR" id="P69538"/>
<dbReference type="GeneID" id="80510931"/>
<dbReference type="GeneID" id="927332"/>
<dbReference type="KEGG" id="vg:927332"/>
<dbReference type="Proteomes" id="UP000002111">
    <property type="component" value="Genome"/>
</dbReference>
<dbReference type="GO" id="GO:0033644">
    <property type="term" value="C:host cell membrane"/>
    <property type="evidence" value="ECO:0007669"/>
    <property type="project" value="UniProtKB-SubCell"/>
</dbReference>
<dbReference type="GO" id="GO:0016020">
    <property type="term" value="C:membrane"/>
    <property type="evidence" value="ECO:0007669"/>
    <property type="project" value="UniProtKB-KW"/>
</dbReference>
<dbReference type="GO" id="GO:0044423">
    <property type="term" value="C:virion component"/>
    <property type="evidence" value="ECO:0007669"/>
    <property type="project" value="UniProtKB-KW"/>
</dbReference>
<gene>
    <name type="primary">IX</name>
</gene>
<name>G9P_BPM13</name>
<sequence length="32" mass="3653">MSVLVYSFASFVLGWCLRSGITYFTRLMETSS</sequence>
<organismHost>
    <name type="scientific">Escherichia coli</name>
    <dbReference type="NCBI Taxonomy" id="562"/>
</organismHost>
<keyword id="KW-0002">3D-structure</keyword>
<keyword id="KW-1043">Host membrane</keyword>
<keyword id="KW-0472">Membrane</keyword>
<keyword id="KW-1185">Reference proteome</keyword>
<keyword id="KW-0812">Transmembrane</keyword>
<keyword id="KW-1133">Transmembrane helix</keyword>
<keyword id="KW-0946">Virion</keyword>
<proteinExistence type="evidence at protein level"/>
<feature type="chain" id="PRO_0000098183" description="Tail virion protein G9P">
    <location>
        <begin position="1"/>
        <end position="32"/>
    </location>
</feature>
<feature type="transmembrane region" description="Helical" evidence="2">
    <location>
        <begin position="2"/>
        <end position="24"/>
    </location>
</feature>
<organism>
    <name type="scientific">Enterobacteria phage M13</name>
    <name type="common">Bacteriophage M13</name>
    <dbReference type="NCBI Taxonomy" id="1977402"/>
    <lineage>
        <taxon>Viruses</taxon>
        <taxon>Monodnaviria</taxon>
        <taxon>Loebvirae</taxon>
        <taxon>Hofneiviricota</taxon>
        <taxon>Faserviricetes</taxon>
        <taxon>Tubulavirales</taxon>
        <taxon>Inoviridae</taxon>
        <taxon>Inovirus</taxon>
    </lineage>
</organism>
<reference key="1">
    <citation type="journal article" date="1980" name="Gene">
        <title>Nucleotide sequence of the filamentous bacteriophage M13 DNA genome: comparison with phage fd.</title>
        <authorList>
            <person name="van Wezenbeek P.M.G.F."/>
            <person name="Hulsebos T.J.M."/>
            <person name="Schoenmakers J.G.G."/>
        </authorList>
    </citation>
    <scope>NUCLEOTIDE SEQUENCE [GENOMIC DNA]</scope>
</reference>
<reference key="2">
    <citation type="journal article" date="1981" name="Proc. Natl. Acad. Sci. U.S.A.">
        <title>Genes VI, VII, and IX of phage M13 code for minor capsid proteins of the virion.</title>
        <authorList>
            <person name="Simons G.F.M."/>
            <person name="Konings R.N.H."/>
            <person name="Schoenmakers J.G.G."/>
        </authorList>
    </citation>
    <scope>CHARACTERIZATION</scope>
</reference>
<comment type="function">
    <text>May initiate with G7P the virion concomitant assembly-budding process, by interacting with the packaging signal of the viral genome. The assembly-budding takes place at the host inner membrane. In turn, G7P and G9P are present at the end of the filamentous virion that emerges first from the bacterial host.</text>
</comment>
<comment type="subcellular location">
    <subcellularLocation>
        <location>Virion</location>
    </subcellularLocation>
    <subcellularLocation>
        <location evidence="3">Host membrane</location>
        <topology evidence="3">Single-pass membrane protein</topology>
    </subcellularLocation>
    <text evidence="1">Prior to assembly, is found associated with the bacterial host inner membrane. There are about five copies of this protein per mature phage that are located on the tail side of the filamentous virion with G7P (By similarity).</text>
</comment>
<comment type="similarity">
    <text evidence="3">Belongs to the inovirus G9P protein family.</text>
</comment>